<organism>
    <name type="scientific">Influenza A virus (strain A/Memphis/18/1978 H3N2)</name>
    <dbReference type="NCBI Taxonomy" id="383579"/>
    <lineage>
        <taxon>Viruses</taxon>
        <taxon>Riboviria</taxon>
        <taxon>Orthornavirae</taxon>
        <taxon>Negarnaviricota</taxon>
        <taxon>Polyploviricotina</taxon>
        <taxon>Insthoviricetes</taxon>
        <taxon>Articulavirales</taxon>
        <taxon>Orthomyxoviridae</taxon>
        <taxon>Alphainfluenzavirus</taxon>
        <taxon>Alphainfluenzavirus influenzae</taxon>
        <taxon>Influenza A virus</taxon>
    </lineage>
</organism>
<sequence>MKTIIALSYIFCQVFAQNLPGNDNSTATLCLGHHAVPNGTLVKTITNDQIEVTNATELVQSSSTGRICDNPHRILDGKNCTLIDALLGDPHCDGFQNEKWDLFVERSKAFSNCYPYDVPDYASLRSLVASSGTLEFFNEGFNWTGVTQNGGSYACKKGPDNSFFSRLNWLYKSESTYPVLNVTMPNNDNFDKLYIWGVHHPSTDKEQTNLYVQASGRVTVSTKRSQQTIIPNVGSRPWVRGLSSRISIYWTIVKPGDVLLINSNGNLIAPRGYFKIRTGKSSIMRSDAPIGTCSSECITPNGSIPNDKPFQNVNKITYGACPKYVKQNTLKLATGMRNVPEKQTRGIFGAIAGFIENGWEGMIDGWYGFRHQNSEGTGQAADLKSTQAAIDQINGKLNRVIEKTNEKFHQIEKEFSEVEGRIQDLEKYVEDTKIDLWSYNAELLVALENQHTIDLTDSEMNKLFEKTRRQLRENAEDMGNGCFKIYHKCDNACIGSIRNGTYDHDVYRDEALNNRFQIKGVELKSGYKDWILWISFAISCFLLCVVLLGFIMWACQKGNIRCNICI</sequence>
<evidence type="ECO:0000255" key="1">
    <source>
        <dbReference type="HAMAP-Rule" id="MF_04072"/>
    </source>
</evidence>
<evidence type="ECO:0000305" key="2"/>
<dbReference type="EMBL" id="CY006707">
    <property type="protein sequence ID" value="ABB96341.1"/>
    <property type="molecule type" value="Genomic_RNA"/>
</dbReference>
<dbReference type="SMR" id="Q2VND2"/>
<dbReference type="GlyCosmos" id="Q2VND2">
    <property type="glycosylation" value="8 sites, No reported glycans"/>
</dbReference>
<dbReference type="Proteomes" id="UP000008574">
    <property type="component" value="Genome"/>
</dbReference>
<dbReference type="GO" id="GO:0020002">
    <property type="term" value="C:host cell plasma membrane"/>
    <property type="evidence" value="ECO:0007669"/>
    <property type="project" value="UniProtKB-SubCell"/>
</dbReference>
<dbReference type="GO" id="GO:0016020">
    <property type="term" value="C:membrane"/>
    <property type="evidence" value="ECO:0007669"/>
    <property type="project" value="UniProtKB-UniRule"/>
</dbReference>
<dbReference type="GO" id="GO:0019031">
    <property type="term" value="C:viral envelope"/>
    <property type="evidence" value="ECO:0007669"/>
    <property type="project" value="UniProtKB-UniRule"/>
</dbReference>
<dbReference type="GO" id="GO:0055036">
    <property type="term" value="C:virion membrane"/>
    <property type="evidence" value="ECO:0007669"/>
    <property type="project" value="UniProtKB-SubCell"/>
</dbReference>
<dbReference type="GO" id="GO:0046789">
    <property type="term" value="F:host cell surface receptor binding"/>
    <property type="evidence" value="ECO:0007669"/>
    <property type="project" value="UniProtKB-UniRule"/>
</dbReference>
<dbReference type="GO" id="GO:0075512">
    <property type="term" value="P:clathrin-dependent endocytosis of virus by host cell"/>
    <property type="evidence" value="ECO:0007669"/>
    <property type="project" value="UniProtKB-UniRule"/>
</dbReference>
<dbReference type="GO" id="GO:0039654">
    <property type="term" value="P:fusion of virus membrane with host endosome membrane"/>
    <property type="evidence" value="ECO:0007669"/>
    <property type="project" value="UniProtKB-UniRule"/>
</dbReference>
<dbReference type="GO" id="GO:0019064">
    <property type="term" value="P:fusion of virus membrane with host plasma membrane"/>
    <property type="evidence" value="ECO:0007669"/>
    <property type="project" value="InterPro"/>
</dbReference>
<dbReference type="GO" id="GO:0046761">
    <property type="term" value="P:viral budding from plasma membrane"/>
    <property type="evidence" value="ECO:0007669"/>
    <property type="project" value="UniProtKB-UniRule"/>
</dbReference>
<dbReference type="GO" id="GO:0019062">
    <property type="term" value="P:virion attachment to host cell"/>
    <property type="evidence" value="ECO:0007669"/>
    <property type="project" value="UniProtKB-KW"/>
</dbReference>
<dbReference type="FunFam" id="3.90.20.10:FF:000001">
    <property type="entry name" value="Hemagglutinin"/>
    <property type="match status" value="1"/>
</dbReference>
<dbReference type="FunFam" id="3.90.209.20:FF:000001">
    <property type="entry name" value="Hemagglutinin"/>
    <property type="match status" value="1"/>
</dbReference>
<dbReference type="Gene3D" id="3.90.20.10">
    <property type="match status" value="1"/>
</dbReference>
<dbReference type="Gene3D" id="3.90.209.20">
    <property type="match status" value="1"/>
</dbReference>
<dbReference type="HAMAP" id="MF_04072">
    <property type="entry name" value="INFV_HEMA"/>
    <property type="match status" value="1"/>
</dbReference>
<dbReference type="InterPro" id="IPR008980">
    <property type="entry name" value="Capsid_hemagglutn"/>
</dbReference>
<dbReference type="InterPro" id="IPR013828">
    <property type="entry name" value="Hemagglutn_HA1_a/b_dom_sf"/>
</dbReference>
<dbReference type="InterPro" id="IPR000149">
    <property type="entry name" value="Hemagglutn_influenz_A"/>
</dbReference>
<dbReference type="InterPro" id="IPR001364">
    <property type="entry name" value="Hemagglutn_influenz_A/B"/>
</dbReference>
<dbReference type="Pfam" id="PF00509">
    <property type="entry name" value="Hemagglutinin"/>
    <property type="match status" value="1"/>
</dbReference>
<dbReference type="PRINTS" id="PR00330">
    <property type="entry name" value="HEMAGGLUTN1"/>
</dbReference>
<dbReference type="PRINTS" id="PR00329">
    <property type="entry name" value="HEMAGGLUTN12"/>
</dbReference>
<dbReference type="SUPFAM" id="SSF58064">
    <property type="entry name" value="Influenza hemagglutinin (stalk)"/>
    <property type="match status" value="1"/>
</dbReference>
<dbReference type="SUPFAM" id="SSF49818">
    <property type="entry name" value="Viral protein domain"/>
    <property type="match status" value="1"/>
</dbReference>
<organismHost>
    <name type="scientific">Aves</name>
    <dbReference type="NCBI Taxonomy" id="8782"/>
</organismHost>
<organismHost>
    <name type="scientific">Cetacea</name>
    <name type="common">whales</name>
    <dbReference type="NCBI Taxonomy" id="9721"/>
</organismHost>
<organismHost>
    <name type="scientific">Homo sapiens</name>
    <name type="common">Human</name>
    <dbReference type="NCBI Taxonomy" id="9606"/>
</organismHost>
<organismHost>
    <name type="scientific">Phocidae</name>
    <name type="common">true seals</name>
    <dbReference type="NCBI Taxonomy" id="9709"/>
</organismHost>
<organismHost>
    <name type="scientific">Sus scrofa</name>
    <name type="common">Pig</name>
    <dbReference type="NCBI Taxonomy" id="9823"/>
</organismHost>
<reference key="1">
    <citation type="submission" date="2005-12" db="EMBL/GenBank/DDBJ databases">
        <title>The NIAID influenza genome sequencing project.</title>
        <authorList>
            <person name="Ghedin E."/>
            <person name="Spiro D."/>
            <person name="Miller N."/>
            <person name="Zaborsky J."/>
            <person name="Feldblyum T."/>
            <person name="Subbu V."/>
            <person name="Shumway M."/>
            <person name="Sparenborg J."/>
            <person name="Groveman L."/>
            <person name="Halpin R."/>
            <person name="Sitz J."/>
            <person name="Koo H."/>
            <person name="Salzberg S.L."/>
            <person name="Webster R.G."/>
            <person name="Hoffmann E."/>
            <person name="Krauss S."/>
            <person name="Naeve C."/>
            <person name="Bao Y."/>
            <person name="Bolotov P."/>
            <person name="Dernovoy D."/>
            <person name="Kiryutin B."/>
            <person name="Lipman D.J."/>
            <person name="Tatusova T."/>
        </authorList>
    </citation>
    <scope>NUCLEOTIDE SEQUENCE [GENOMIC RNA]</scope>
</reference>
<name>HEMA_I78A8</name>
<gene>
    <name evidence="1" type="primary">HA</name>
</gene>
<accession>Q2VND2</accession>
<proteinExistence type="inferred from homology"/>
<protein>
    <recommendedName>
        <fullName evidence="1">Hemagglutinin</fullName>
    </recommendedName>
    <component>
        <recommendedName>
            <fullName evidence="1">Hemagglutinin HA1 chain</fullName>
        </recommendedName>
    </component>
    <component>
        <recommendedName>
            <fullName evidence="1">Hemagglutinin HA2 chain</fullName>
        </recommendedName>
    </component>
</protein>
<comment type="function">
    <text evidence="1">Binds to sialic acid-containing receptors on the cell surface, bringing about the attachment of the virus particle to the cell. This attachment induces virion internalization either through clathrin-dependent endocytosis or through clathrin- and caveolin-independent pathway. Plays a major role in the determination of host range restriction and virulence. Class I viral fusion protein. Responsible for penetration of the virus into the cell cytoplasm by mediating the fusion of the membrane of the endocytosed virus particle with the endosomal membrane. Low pH in endosomes induces an irreversible conformational change in HA2, releasing the fusion hydrophobic peptide. Several trimers are required to form a competent fusion pore.</text>
</comment>
<comment type="subunit">
    <text evidence="1">Homotrimer of disulfide-linked HA1-HA2.</text>
</comment>
<comment type="subcellular location">
    <subcellularLocation>
        <location evidence="1">Virion membrane</location>
        <topology evidence="1">Single-pass type I membrane protein</topology>
    </subcellularLocation>
    <subcellularLocation>
        <location evidence="1">Host apical cell membrane</location>
        <topology evidence="1">Single-pass type I membrane protein</topology>
    </subcellularLocation>
    <text evidence="1">Targeted to the apical plasma membrane in epithelial polarized cells through a signal present in the transmembrane domain. Associated with glycosphingolipid- and cholesterol-enriched detergent-resistant lipid rafts.</text>
</comment>
<comment type="PTM">
    <text evidence="1">Palmitoylated.</text>
</comment>
<comment type="PTM">
    <text evidence="1">In natural infection, inactive HA is matured into HA1 and HA2 outside the cell by one or more trypsin-like, arginine-specific endoprotease secreted by the bronchial epithelial cells. One identified protease that may be involved in this process is secreted in lungs by club cells.</text>
</comment>
<comment type="miscellaneous">
    <text>Major glycoprotein, comprises over 80% of the envelope proteins present in virus particle.</text>
</comment>
<comment type="miscellaneous">
    <text>The extent of infection into host organism is determined by HA. Influenza viruses bud from the apical surface of polarized epithelial cells (e.g. bronchial epithelial cells) into lumen of lungs and are therefore usually pneumotropic. The reason is that HA is cleaved by tryptase clara which is restricted to lungs. However, HAs of H5 and H7 pantropic avian viruses subtypes can be cleaved by furin and subtilisin-type enzymes, allowing the virus to grow in other organs than lungs.</text>
</comment>
<comment type="miscellaneous">
    <text evidence="2">The influenza A genome consist of 8 RNA segments. Genetic variation of hemagglutinin and/or neuraminidase genes results in the emergence of new influenza strains. The mechanism of variation can be the result of point mutations or the result of genetic reassortment between segments of two different strains.</text>
</comment>
<comment type="similarity">
    <text evidence="1">Belongs to the influenza viruses hemagglutinin family.</text>
</comment>
<feature type="signal peptide" evidence="1">
    <location>
        <begin position="1"/>
        <end position="16"/>
    </location>
</feature>
<feature type="chain" id="PRO_0000440477" description="Hemagglutinin" evidence="1">
    <location>
        <begin position="17"/>
        <end position="566"/>
    </location>
</feature>
<feature type="chain" id="PRO_5000135906" description="Hemagglutinin HA1 chain">
    <location>
        <begin position="17"/>
        <end position="344"/>
    </location>
</feature>
<feature type="chain" id="PRO_5000135907" description="Hemagglutinin HA2 chain" evidence="1">
    <location>
        <begin position="346"/>
        <end position="566"/>
    </location>
</feature>
<feature type="topological domain" description="Extracellular" evidence="1">
    <location>
        <begin position="17"/>
        <end position="530"/>
    </location>
</feature>
<feature type="transmembrane region" description="Helical" evidence="1">
    <location>
        <begin position="531"/>
        <end position="551"/>
    </location>
</feature>
<feature type="topological domain" description="Cytoplasmic" evidence="1">
    <location>
        <begin position="552"/>
        <end position="566"/>
    </location>
</feature>
<feature type="site" description="Cleavage; by host" evidence="1">
    <location>
        <begin position="345"/>
        <end position="346"/>
    </location>
</feature>
<feature type="lipid moiety-binding region" description="S-palmitoyl cysteine; by host" evidence="1">
    <location>
        <position position="555"/>
    </location>
</feature>
<feature type="lipid moiety-binding region" description="S-palmitoyl cysteine; by host" evidence="1">
    <location>
        <position position="562"/>
    </location>
</feature>
<feature type="lipid moiety-binding region" description="S-palmitoyl cysteine; by host" evidence="1">
    <location>
        <position position="565"/>
    </location>
</feature>
<feature type="glycosylation site" description="N-linked (GlcNAc...) asparagine; by host" evidence="1">
    <location>
        <position position="24"/>
    </location>
</feature>
<feature type="glycosylation site" description="N-linked (GlcNAc...) asparagine; by host" evidence="1">
    <location>
        <position position="38"/>
    </location>
</feature>
<feature type="glycosylation site" description="N-linked (GlcNAc...) asparagine; by host" evidence="1">
    <location>
        <position position="54"/>
    </location>
</feature>
<feature type="glycosylation site" description="N-linked (GlcNAc...) asparagine; by host" evidence="1">
    <location>
        <position position="79"/>
    </location>
</feature>
<feature type="glycosylation site" description="N-linked (GlcNAc...) asparagine; by host" evidence="1">
    <location>
        <position position="142"/>
    </location>
</feature>
<feature type="glycosylation site" description="N-linked (GlcNAc...) asparagine; by host" evidence="1">
    <location>
        <position position="181"/>
    </location>
</feature>
<feature type="glycosylation site" description="N-linked (GlcNAc...) asparagine; by host" evidence="1">
    <location>
        <position position="301"/>
    </location>
</feature>
<feature type="glycosylation site" description="N-linked (GlcNAc...) asparagine; by host" evidence="1">
    <location>
        <position position="499"/>
    </location>
</feature>
<feature type="disulfide bond" description="Interchain (between HA1 and HA2 chains)" evidence="1">
    <location>
        <begin position="30"/>
        <end position="482"/>
    </location>
</feature>
<feature type="disulfide bond" evidence="1">
    <location>
        <begin position="68"/>
        <end position="293"/>
    </location>
</feature>
<feature type="disulfide bond" evidence="1">
    <location>
        <begin position="80"/>
        <end position="92"/>
    </location>
</feature>
<feature type="disulfide bond" evidence="1">
    <location>
        <begin position="113"/>
        <end position="155"/>
    </location>
</feature>
<feature type="disulfide bond" evidence="1">
    <location>
        <begin position="297"/>
        <end position="321"/>
    </location>
</feature>
<feature type="disulfide bond" evidence="1">
    <location>
        <begin position="489"/>
        <end position="493"/>
    </location>
</feature>
<keyword id="KW-1167">Clathrin- and caveolin-independent endocytosis of virus by host</keyword>
<keyword id="KW-1165">Clathrin-mediated endocytosis of virus by host</keyword>
<keyword id="KW-1015">Disulfide bond</keyword>
<keyword id="KW-1170">Fusion of virus membrane with host endosomal membrane</keyword>
<keyword id="KW-1168">Fusion of virus membrane with host membrane</keyword>
<keyword id="KW-0325">Glycoprotein</keyword>
<keyword id="KW-0348">Hemagglutinin</keyword>
<keyword id="KW-1032">Host cell membrane</keyword>
<keyword id="KW-1043">Host membrane</keyword>
<keyword id="KW-0945">Host-virus interaction</keyword>
<keyword id="KW-0449">Lipoprotein</keyword>
<keyword id="KW-0472">Membrane</keyword>
<keyword id="KW-0564">Palmitate</keyword>
<keyword id="KW-0732">Signal</keyword>
<keyword id="KW-0812">Transmembrane</keyword>
<keyword id="KW-1133">Transmembrane helix</keyword>
<keyword id="KW-1161">Viral attachment to host cell</keyword>
<keyword id="KW-0261">Viral envelope protein</keyword>
<keyword id="KW-1162">Viral penetration into host cytoplasm</keyword>
<keyword id="KW-0946">Virion</keyword>
<keyword id="KW-1164">Virus endocytosis by host</keyword>
<keyword id="KW-1160">Virus entry into host cell</keyword>